<feature type="chain" id="PRO_0000269764" description="Histone-lysine N-methyltransferase, H3 lysine-4 specific">
    <location>
        <begin position="1"/>
        <end position="975"/>
    </location>
</feature>
<feature type="domain" description="SET" evidence="3">
    <location>
        <begin position="833"/>
        <end position="950"/>
    </location>
</feature>
<feature type="domain" description="Post-SET" evidence="2">
    <location>
        <begin position="959"/>
        <end position="975"/>
    </location>
</feature>
<feature type="region of interest" description="Disordered" evidence="4">
    <location>
        <begin position="10"/>
        <end position="61"/>
    </location>
</feature>
<feature type="region of interest" description="Disordered" evidence="4">
    <location>
        <begin position="516"/>
        <end position="549"/>
    </location>
</feature>
<feature type="region of interest" description="Disordered" evidence="4">
    <location>
        <begin position="562"/>
        <end position="610"/>
    </location>
</feature>
<feature type="short sequence motif" description="RxxxRR motif" evidence="1">
    <location>
        <begin position="799"/>
        <end position="804"/>
    </location>
</feature>
<feature type="compositionally biased region" description="Basic and acidic residues" evidence="4">
    <location>
        <begin position="516"/>
        <end position="535"/>
    </location>
</feature>
<feature type="compositionally biased region" description="Acidic residues" evidence="4">
    <location>
        <begin position="574"/>
        <end position="587"/>
    </location>
</feature>
<feature type="binding site" evidence="3">
    <location>
        <position position="949"/>
    </location>
    <ligand>
        <name>S-adenosyl-L-methionine</name>
        <dbReference type="ChEBI" id="CHEBI:59789"/>
    </ligand>
</feature>
<organism>
    <name type="scientific">Eremothecium gossypii (strain ATCC 10895 / CBS 109.51 / FGSC 9923 / NRRL Y-1056)</name>
    <name type="common">Yeast</name>
    <name type="synonym">Ashbya gossypii</name>
    <dbReference type="NCBI Taxonomy" id="284811"/>
    <lineage>
        <taxon>Eukaryota</taxon>
        <taxon>Fungi</taxon>
        <taxon>Dikarya</taxon>
        <taxon>Ascomycota</taxon>
        <taxon>Saccharomycotina</taxon>
        <taxon>Saccharomycetes</taxon>
        <taxon>Saccharomycetales</taxon>
        <taxon>Saccharomycetaceae</taxon>
        <taxon>Eremothecium</taxon>
    </lineage>
</organism>
<comment type="function">
    <text evidence="1">Catalytic component of the COMPASS (Set1C) complex that specifically mono-, di- and trimethylates histone H3 to form H3K4me1/2/3. Binds RNAs which might negatively affect its histone methyltransferase activity. COMPASS recognizes ubiquitinated H2B on one face of the nucleosome which stimulates the methylation of H3 on the opposing face.</text>
</comment>
<comment type="catalytic activity">
    <reaction evidence="1">
        <text>L-lysyl(4)-[histone H3] + 3 S-adenosyl-L-methionine = N(6),N(6),N(6)-trimethyl-L-lysyl(4)-[histone H3] + 3 S-adenosyl-L-homocysteine + 3 H(+)</text>
        <dbReference type="Rhea" id="RHEA:60260"/>
        <dbReference type="Rhea" id="RHEA-COMP:15537"/>
        <dbReference type="Rhea" id="RHEA-COMP:15547"/>
        <dbReference type="ChEBI" id="CHEBI:15378"/>
        <dbReference type="ChEBI" id="CHEBI:29969"/>
        <dbReference type="ChEBI" id="CHEBI:57856"/>
        <dbReference type="ChEBI" id="CHEBI:59789"/>
        <dbReference type="ChEBI" id="CHEBI:61961"/>
        <dbReference type="EC" id="2.1.1.354"/>
    </reaction>
</comment>
<comment type="catalytic activity">
    <reaction evidence="1">
        <text>N(6)-methyl-L-lysyl(4)-[histone H3] + S-adenosyl-L-methionine = N(6),N(6)-dimethyl-L-lysyl(4)-[histone H3] + S-adenosyl-L-homocysteine + H(+)</text>
        <dbReference type="Rhea" id="RHEA:60268"/>
        <dbReference type="Rhea" id="RHEA-COMP:15540"/>
        <dbReference type="Rhea" id="RHEA-COMP:15543"/>
        <dbReference type="ChEBI" id="CHEBI:15378"/>
        <dbReference type="ChEBI" id="CHEBI:57856"/>
        <dbReference type="ChEBI" id="CHEBI:59789"/>
        <dbReference type="ChEBI" id="CHEBI:61929"/>
        <dbReference type="ChEBI" id="CHEBI:61976"/>
    </reaction>
</comment>
<comment type="catalytic activity">
    <reaction evidence="1">
        <text>N(6),N(6)-dimethyl-L-lysyl(4)-[histone H3] + S-adenosyl-L-methionine = N(6),N(6),N(6)-trimethyl-L-lysyl(4)-[histone H3] + S-adenosyl-L-homocysteine + H(+)</text>
        <dbReference type="Rhea" id="RHEA:60272"/>
        <dbReference type="Rhea" id="RHEA-COMP:15537"/>
        <dbReference type="Rhea" id="RHEA-COMP:15540"/>
        <dbReference type="ChEBI" id="CHEBI:15378"/>
        <dbReference type="ChEBI" id="CHEBI:57856"/>
        <dbReference type="ChEBI" id="CHEBI:59789"/>
        <dbReference type="ChEBI" id="CHEBI:61961"/>
        <dbReference type="ChEBI" id="CHEBI:61976"/>
    </reaction>
</comment>
<comment type="subunit">
    <text evidence="1">Component of the Set1C/COMPASS complex.</text>
</comment>
<comment type="subcellular location">
    <subcellularLocation>
        <location evidence="5">Nucleus</location>
    </subcellularLocation>
    <subcellularLocation>
        <location evidence="5">Chromosome</location>
    </subcellularLocation>
</comment>
<comment type="domain">
    <text evidence="1">The RxxxRR motif forms an adapter helix that bridges the nucleosome and ubiquitin.</text>
</comment>
<comment type="similarity">
    <text evidence="3">Belongs to the class V-like SAM-binding methyltransferase superfamily.</text>
</comment>
<protein>
    <recommendedName>
        <fullName>Histone-lysine N-methyltransferase, H3 lysine-4 specific</fullName>
        <ecNumber evidence="1">2.1.1.354</ecNumber>
    </recommendedName>
    <alternativeName>
        <fullName>COMPASS component SET1</fullName>
    </alternativeName>
    <alternativeName>
        <fullName>SET domain-containing protein 1</fullName>
    </alternativeName>
</protein>
<sequence>MSGYYNHVKHQGYSRYGQNSTVRNGQHDGLRYRNPSPAHNGTNEGEGLQGSRYENAGGVTHARRPPPVVKWGEAAFRAKYHYFDVEERKLLHLDEMKHWQNGRLPANGYVLVADAGSKGRPVMRERNPEEQAVDPRGARAAHTVRRVRSLLTALPRIPYDAHWVGPEPPKEVVVFPKQREQALSVQDPIIKNFFGTFGEVAHFESFNDPNNALPLNIYLVRYINVEGNPDSPYKAAYKAVKQFAKQDYLVSGARFAVRLNMNGFLQKTIDKFVTENLQRAAKLRHEQAKQQSTVQKVTNVSAVPSGVPPPKIPLGLERIVNNKPILRVSARFCALHGITSEDFKYGLKNYHWTRVINHYSGIYIIFDDIAEAEKCLQMESLRLTFFSRRRKIPVKIKFMLIEPSHQPPASQPLTDQDEVPKVYETEAELIEETLKHIINELKTTLYKDIRRRLLGPTIFDALNPGNYPDIVARRQKEEEAKKEKEKAMVEKTKKEAPSAAAFDIFNLYGTAYKKRDGTKGKKRHVAEGRPEESSGRRRIQSKGTAPMAHMLNYESLKVNGTASPIKEAESETCSSDEEDDDNFDVEMTDQSSIKKLKRESTATTPEQEPLQERVAGLSAERTKELLSYPEKYRPLAGDQPEPIYPEFLIEKYDDPLLSIVDLQRSVKDKEDMELLKKVIAYDREEVKDVINDIEFFAWRLHRDYKEHKENMQHQSKLSESTYKNLLNAHGGCFKQQGFRKMPDKLKSIYLPHRRKLNQPLNTVYHHGIEDFANTDNNKMDTDPPEDTFTPEQTSSRVNRALQRRFQQDIEAQKAAIGTESELLSLNQLTKRKKPVTFARSAIHNWGLYALEPISAKEMIIEYVGERIRQPVAEMREKRYLKSGIGSSYLFRVDESTVIDATKKGGIARFINHCCDPSCTAKIIKVGGMKRIVIYALRDIAANEELTYDYKFERETDDEERLPCLCGAPNCKGFLN</sequence>
<dbReference type="EC" id="2.1.1.354" evidence="1"/>
<dbReference type="EMBL" id="AE016815">
    <property type="protein sequence ID" value="AAS50907.2"/>
    <property type="molecule type" value="Genomic_DNA"/>
</dbReference>
<dbReference type="RefSeq" id="NP_983083.2">
    <property type="nucleotide sequence ID" value="NM_208436.2"/>
</dbReference>
<dbReference type="SMR" id="Q75D88"/>
<dbReference type="FunCoup" id="Q75D88">
    <property type="interactions" value="164"/>
</dbReference>
<dbReference type="STRING" id="284811.Q75D88"/>
<dbReference type="EnsemblFungi" id="AAS50907">
    <property type="protein sequence ID" value="AAS50907"/>
    <property type="gene ID" value="AGOS_ABR136W"/>
</dbReference>
<dbReference type="GeneID" id="4619193"/>
<dbReference type="KEGG" id="ago:AGOS_ABR136W"/>
<dbReference type="eggNOG" id="KOG1080">
    <property type="taxonomic scope" value="Eukaryota"/>
</dbReference>
<dbReference type="HOGENOM" id="CLU_004391_1_0_1"/>
<dbReference type="InParanoid" id="Q75D88"/>
<dbReference type="OMA" id="ERLPCLC"/>
<dbReference type="OrthoDB" id="308383at2759"/>
<dbReference type="Proteomes" id="UP000000591">
    <property type="component" value="Chromosome II"/>
</dbReference>
<dbReference type="GO" id="GO:0000781">
    <property type="term" value="C:chromosome, telomeric region"/>
    <property type="evidence" value="ECO:0007669"/>
    <property type="project" value="EnsemblFungi"/>
</dbReference>
<dbReference type="GO" id="GO:0048188">
    <property type="term" value="C:Set1C/COMPASS complex"/>
    <property type="evidence" value="ECO:0000250"/>
    <property type="project" value="UniProtKB"/>
</dbReference>
<dbReference type="GO" id="GO:0042800">
    <property type="term" value="F:histone H3K4 methyltransferase activity"/>
    <property type="evidence" value="ECO:0000318"/>
    <property type="project" value="GO_Central"/>
</dbReference>
<dbReference type="GO" id="GO:0140999">
    <property type="term" value="F:histone H3K4 trimethyltransferase activity"/>
    <property type="evidence" value="ECO:0007669"/>
    <property type="project" value="UniProtKB-EC"/>
</dbReference>
<dbReference type="GO" id="GO:0003723">
    <property type="term" value="F:RNA binding"/>
    <property type="evidence" value="ECO:0000250"/>
    <property type="project" value="UniProtKB"/>
</dbReference>
<dbReference type="GO" id="GO:0030437">
    <property type="term" value="P:ascospore formation"/>
    <property type="evidence" value="ECO:0007669"/>
    <property type="project" value="EnsemblFungi"/>
</dbReference>
<dbReference type="GO" id="GO:0033554">
    <property type="term" value="P:cellular response to stress"/>
    <property type="evidence" value="ECO:0007669"/>
    <property type="project" value="EnsemblFungi"/>
</dbReference>
<dbReference type="GO" id="GO:0042138">
    <property type="term" value="P:meiotic DNA double-strand break formation"/>
    <property type="evidence" value="ECO:0007669"/>
    <property type="project" value="EnsemblFungi"/>
</dbReference>
<dbReference type="GO" id="GO:0032259">
    <property type="term" value="P:methylation"/>
    <property type="evidence" value="ECO:0007669"/>
    <property type="project" value="UniProtKB-KW"/>
</dbReference>
<dbReference type="GO" id="GO:0000122">
    <property type="term" value="P:negative regulation of transcription by RNA polymerase II"/>
    <property type="evidence" value="ECO:0007669"/>
    <property type="project" value="EnsemblFungi"/>
</dbReference>
<dbReference type="GO" id="GO:1905088">
    <property type="term" value="P:positive regulation of synaptonemal complex assembly"/>
    <property type="evidence" value="ECO:0007669"/>
    <property type="project" value="EnsemblFungi"/>
</dbReference>
<dbReference type="GO" id="GO:0045944">
    <property type="term" value="P:positive regulation of transcription by RNA polymerase II"/>
    <property type="evidence" value="ECO:0007669"/>
    <property type="project" value="EnsemblFungi"/>
</dbReference>
<dbReference type="GO" id="GO:0000183">
    <property type="term" value="P:rDNA heterochromatin formation"/>
    <property type="evidence" value="ECO:0007669"/>
    <property type="project" value="EnsemblFungi"/>
</dbReference>
<dbReference type="GO" id="GO:1902275">
    <property type="term" value="P:regulation of chromatin organization"/>
    <property type="evidence" value="ECO:0007669"/>
    <property type="project" value="EnsemblFungi"/>
</dbReference>
<dbReference type="GO" id="GO:1903341">
    <property type="term" value="P:regulation of meiotic DNA double-strand break formation"/>
    <property type="evidence" value="ECO:0007669"/>
    <property type="project" value="EnsemblFungi"/>
</dbReference>
<dbReference type="GO" id="GO:0030466">
    <property type="term" value="P:silent mating-type cassette heterochromatin formation"/>
    <property type="evidence" value="ECO:0007669"/>
    <property type="project" value="EnsemblFungi"/>
</dbReference>
<dbReference type="GO" id="GO:0055092">
    <property type="term" value="P:sterol homeostasis"/>
    <property type="evidence" value="ECO:0007669"/>
    <property type="project" value="EnsemblFungi"/>
</dbReference>
<dbReference type="GO" id="GO:0031509">
    <property type="term" value="P:subtelomeric heterochromatin formation"/>
    <property type="evidence" value="ECO:0007669"/>
    <property type="project" value="EnsemblFungi"/>
</dbReference>
<dbReference type="GO" id="GO:0007130">
    <property type="term" value="P:synaptonemal complex assembly"/>
    <property type="evidence" value="ECO:0007669"/>
    <property type="project" value="EnsemblFungi"/>
</dbReference>
<dbReference type="GO" id="GO:0000723">
    <property type="term" value="P:telomere maintenance"/>
    <property type="evidence" value="ECO:0007669"/>
    <property type="project" value="EnsemblFungi"/>
</dbReference>
<dbReference type="CDD" id="cd20072">
    <property type="entry name" value="SET_SET1"/>
    <property type="match status" value="1"/>
</dbReference>
<dbReference type="FunFam" id="2.170.270.10:FF:000056">
    <property type="entry name" value="Histone-lysine N-methyltransferase, H3 lysine-4 specific"/>
    <property type="match status" value="1"/>
</dbReference>
<dbReference type="Gene3D" id="3.30.70.330">
    <property type="match status" value="1"/>
</dbReference>
<dbReference type="Gene3D" id="2.170.270.10">
    <property type="entry name" value="SET domain"/>
    <property type="match status" value="1"/>
</dbReference>
<dbReference type="InterPro" id="IPR024657">
    <property type="entry name" value="COMPASS_Set1_N-SET"/>
</dbReference>
<dbReference type="InterPro" id="IPR012677">
    <property type="entry name" value="Nucleotide-bd_a/b_plait_sf"/>
</dbReference>
<dbReference type="InterPro" id="IPR003616">
    <property type="entry name" value="Post-SET_dom"/>
</dbReference>
<dbReference type="InterPro" id="IPR044570">
    <property type="entry name" value="Set1-like"/>
</dbReference>
<dbReference type="InterPro" id="IPR017111">
    <property type="entry name" value="Set1_fungi"/>
</dbReference>
<dbReference type="InterPro" id="IPR048669">
    <property type="entry name" value="SET1_RBD"/>
</dbReference>
<dbReference type="InterPro" id="IPR024636">
    <property type="entry name" value="SET_assoc"/>
</dbReference>
<dbReference type="InterPro" id="IPR001214">
    <property type="entry name" value="SET_dom"/>
</dbReference>
<dbReference type="InterPro" id="IPR046341">
    <property type="entry name" value="SET_dom_sf"/>
</dbReference>
<dbReference type="PANTHER" id="PTHR45814">
    <property type="entry name" value="HISTONE-LYSINE N-METHYLTRANSFERASE SETD1"/>
    <property type="match status" value="1"/>
</dbReference>
<dbReference type="PANTHER" id="PTHR45814:SF2">
    <property type="entry name" value="HISTONE-LYSINE N-METHYLTRANSFERASE SETD1"/>
    <property type="match status" value="1"/>
</dbReference>
<dbReference type="Pfam" id="PF11764">
    <property type="entry name" value="N-SET"/>
    <property type="match status" value="1"/>
</dbReference>
<dbReference type="Pfam" id="PF00856">
    <property type="entry name" value="SET"/>
    <property type="match status" value="1"/>
</dbReference>
<dbReference type="Pfam" id="PF21569">
    <property type="entry name" value="SET1_RBD"/>
    <property type="match status" value="1"/>
</dbReference>
<dbReference type="Pfam" id="PF11767">
    <property type="entry name" value="SET_assoc"/>
    <property type="match status" value="1"/>
</dbReference>
<dbReference type="PIRSF" id="PIRSF037104">
    <property type="entry name" value="Histone_H3-K4_mtfrase_Set1_fun"/>
    <property type="match status" value="1"/>
</dbReference>
<dbReference type="SMART" id="SM01291">
    <property type="entry name" value="N-SET"/>
    <property type="match status" value="1"/>
</dbReference>
<dbReference type="SMART" id="SM00508">
    <property type="entry name" value="PostSET"/>
    <property type="match status" value="1"/>
</dbReference>
<dbReference type="SMART" id="SM00317">
    <property type="entry name" value="SET"/>
    <property type="match status" value="1"/>
</dbReference>
<dbReference type="SUPFAM" id="SSF82199">
    <property type="entry name" value="SET domain"/>
    <property type="match status" value="1"/>
</dbReference>
<dbReference type="PROSITE" id="PS50868">
    <property type="entry name" value="POST_SET"/>
    <property type="match status" value="1"/>
</dbReference>
<dbReference type="PROSITE" id="PS51572">
    <property type="entry name" value="SAM_MT43_1"/>
    <property type="match status" value="1"/>
</dbReference>
<dbReference type="PROSITE" id="PS50280">
    <property type="entry name" value="SET"/>
    <property type="match status" value="1"/>
</dbReference>
<proteinExistence type="inferred from homology"/>
<accession>Q75D88</accession>
<name>SET1_EREGS</name>
<gene>
    <name type="primary">SET1</name>
    <name type="ordered locus">ABR136W</name>
</gene>
<reference key="1">
    <citation type="journal article" date="2004" name="Science">
        <title>The Ashbya gossypii genome as a tool for mapping the ancient Saccharomyces cerevisiae genome.</title>
        <authorList>
            <person name="Dietrich F.S."/>
            <person name="Voegeli S."/>
            <person name="Brachat S."/>
            <person name="Lerch A."/>
            <person name="Gates K."/>
            <person name="Steiner S."/>
            <person name="Mohr C."/>
            <person name="Poehlmann R."/>
            <person name="Luedi P."/>
            <person name="Choi S."/>
            <person name="Wing R.A."/>
            <person name="Flavier A."/>
            <person name="Gaffney T.D."/>
            <person name="Philippsen P."/>
        </authorList>
    </citation>
    <scope>NUCLEOTIDE SEQUENCE [LARGE SCALE GENOMIC DNA]</scope>
    <source>
        <strain>ATCC 10895 / CBS 109.51 / FGSC 9923 / NRRL Y-1056</strain>
    </source>
</reference>
<reference key="2">
    <citation type="journal article" date="2013" name="G3 (Bethesda)">
        <title>Genomes of Ashbya fungi isolated from insects reveal four mating-type loci, numerous translocations, lack of transposons, and distinct gene duplications.</title>
        <authorList>
            <person name="Dietrich F.S."/>
            <person name="Voegeli S."/>
            <person name="Kuo S."/>
            <person name="Philippsen P."/>
        </authorList>
    </citation>
    <scope>GENOME REANNOTATION</scope>
    <scope>SEQUENCE REVISION TO 655; 659 AND 671</scope>
    <source>
        <strain>ATCC 10895 / CBS 109.51 / FGSC 9923 / NRRL Y-1056</strain>
    </source>
</reference>
<evidence type="ECO:0000250" key="1">
    <source>
        <dbReference type="UniProtKB" id="P38827"/>
    </source>
</evidence>
<evidence type="ECO:0000255" key="2">
    <source>
        <dbReference type="PROSITE-ProRule" id="PRU00155"/>
    </source>
</evidence>
<evidence type="ECO:0000255" key="3">
    <source>
        <dbReference type="PROSITE-ProRule" id="PRU00190"/>
    </source>
</evidence>
<evidence type="ECO:0000256" key="4">
    <source>
        <dbReference type="SAM" id="MobiDB-lite"/>
    </source>
</evidence>
<evidence type="ECO:0000305" key="5"/>
<keyword id="KW-0156">Chromatin regulator</keyword>
<keyword id="KW-0158">Chromosome</keyword>
<keyword id="KW-0489">Methyltransferase</keyword>
<keyword id="KW-0539">Nucleus</keyword>
<keyword id="KW-1185">Reference proteome</keyword>
<keyword id="KW-0949">S-adenosyl-L-methionine</keyword>
<keyword id="KW-0808">Transferase</keyword>